<comment type="function">
    <text evidence="1">Negative regulator of the canonical Wnt signaling pathway involved in neuroectodermal patterning. Acts by specifically binding phosphatidylinositol 4,5-bisphosphate (PtdIns(4,5)P2), translocating to the cell membrane and interacting with key regulators of the canonical Wnt signaling pathway, such as components of the beta-catenin destruction complex (By similarity).</text>
</comment>
<comment type="subunit">
    <text evidence="1">Interacts with APC.</text>
</comment>
<comment type="subcellular location">
    <subcellularLocation>
        <location evidence="1">Cell membrane</location>
        <topology evidence="1">Peripheral membrane protein</topology>
    </subcellularLocation>
    <text evidence="1">Translocates to the cell membrane following binding to PtdIns(4,5)P2.</text>
</comment>
<comment type="alternative products">
    <event type="alternative splicing"/>
    <isoform>
        <id>Q8CCJ4-1</id>
        <name>1</name>
        <sequence type="displayed"/>
    </isoform>
    <isoform>
        <id>Q8CCJ4-2</id>
        <name>2</name>
        <sequence type="described" ref="VSP_024090"/>
    </isoform>
</comment>
<comment type="similarity">
    <text evidence="5">Belongs to the Amer family.</text>
</comment>
<comment type="sequence caution" evidence="5">
    <conflict type="erroneous initiation">
        <sequence resource="EMBL-CDS" id="AAH30356"/>
    </conflict>
</comment>
<comment type="sequence caution" evidence="5">
    <conflict type="erroneous initiation">
        <sequence resource="EMBL-CDS" id="AAH56350"/>
    </conflict>
</comment>
<comment type="sequence caution" evidence="5">
    <conflict type="erroneous initiation">
        <sequence resource="EMBL-CDS" id="BAB27452"/>
    </conflict>
</comment>
<comment type="sequence caution" evidence="5">
    <conflict type="erroneous initiation">
        <sequence resource="EMBL-CDS" id="BAC27972"/>
    </conflict>
</comment>
<comment type="sequence caution" evidence="5">
    <conflict type="erroneous initiation">
        <sequence resource="EMBL-CDS" id="BAE23912"/>
    </conflict>
</comment>
<proteinExistence type="evidence at protein level"/>
<reference key="1">
    <citation type="journal article" date="2009" name="PLoS Biol.">
        <title>Lineage-specific biology revealed by a finished genome assembly of the mouse.</title>
        <authorList>
            <person name="Church D.M."/>
            <person name="Goodstadt L."/>
            <person name="Hillier L.W."/>
            <person name="Zody M.C."/>
            <person name="Goldstein S."/>
            <person name="She X."/>
            <person name="Bult C.J."/>
            <person name="Agarwala R."/>
            <person name="Cherry J.L."/>
            <person name="DiCuccio M."/>
            <person name="Hlavina W."/>
            <person name="Kapustin Y."/>
            <person name="Meric P."/>
            <person name="Maglott D."/>
            <person name="Birtle Z."/>
            <person name="Marques A.C."/>
            <person name="Graves T."/>
            <person name="Zhou S."/>
            <person name="Teague B."/>
            <person name="Potamousis K."/>
            <person name="Churas C."/>
            <person name="Place M."/>
            <person name="Herschleb J."/>
            <person name="Runnheim R."/>
            <person name="Forrest D."/>
            <person name="Amos-Landgraf J."/>
            <person name="Schwartz D.C."/>
            <person name="Cheng Z."/>
            <person name="Lindblad-Toh K."/>
            <person name="Eichler E.E."/>
            <person name="Ponting C.P."/>
        </authorList>
    </citation>
    <scope>NUCLEOTIDE SEQUENCE [LARGE SCALE GENOMIC DNA]</scope>
    <source>
        <strain>C57BL/6J</strain>
    </source>
</reference>
<reference key="2">
    <citation type="journal article" date="2005" name="Science">
        <title>The transcriptional landscape of the mammalian genome.</title>
        <authorList>
            <person name="Carninci P."/>
            <person name="Kasukawa T."/>
            <person name="Katayama S."/>
            <person name="Gough J."/>
            <person name="Frith M.C."/>
            <person name="Maeda N."/>
            <person name="Oyama R."/>
            <person name="Ravasi T."/>
            <person name="Lenhard B."/>
            <person name="Wells C."/>
            <person name="Kodzius R."/>
            <person name="Shimokawa K."/>
            <person name="Bajic V.B."/>
            <person name="Brenner S.E."/>
            <person name="Batalov S."/>
            <person name="Forrest A.R."/>
            <person name="Zavolan M."/>
            <person name="Davis M.J."/>
            <person name="Wilming L.G."/>
            <person name="Aidinis V."/>
            <person name="Allen J.E."/>
            <person name="Ambesi-Impiombato A."/>
            <person name="Apweiler R."/>
            <person name="Aturaliya R.N."/>
            <person name="Bailey T.L."/>
            <person name="Bansal M."/>
            <person name="Baxter L."/>
            <person name="Beisel K.W."/>
            <person name="Bersano T."/>
            <person name="Bono H."/>
            <person name="Chalk A.M."/>
            <person name="Chiu K.P."/>
            <person name="Choudhary V."/>
            <person name="Christoffels A."/>
            <person name="Clutterbuck D.R."/>
            <person name="Crowe M.L."/>
            <person name="Dalla E."/>
            <person name="Dalrymple B.P."/>
            <person name="de Bono B."/>
            <person name="Della Gatta G."/>
            <person name="di Bernardo D."/>
            <person name="Down T."/>
            <person name="Engstrom P."/>
            <person name="Fagiolini M."/>
            <person name="Faulkner G."/>
            <person name="Fletcher C.F."/>
            <person name="Fukushima T."/>
            <person name="Furuno M."/>
            <person name="Futaki S."/>
            <person name="Gariboldi M."/>
            <person name="Georgii-Hemming P."/>
            <person name="Gingeras T.R."/>
            <person name="Gojobori T."/>
            <person name="Green R.E."/>
            <person name="Gustincich S."/>
            <person name="Harbers M."/>
            <person name="Hayashi Y."/>
            <person name="Hensch T.K."/>
            <person name="Hirokawa N."/>
            <person name="Hill D."/>
            <person name="Huminiecki L."/>
            <person name="Iacono M."/>
            <person name="Ikeo K."/>
            <person name="Iwama A."/>
            <person name="Ishikawa T."/>
            <person name="Jakt M."/>
            <person name="Kanapin A."/>
            <person name="Katoh M."/>
            <person name="Kawasawa Y."/>
            <person name="Kelso J."/>
            <person name="Kitamura H."/>
            <person name="Kitano H."/>
            <person name="Kollias G."/>
            <person name="Krishnan S.P."/>
            <person name="Kruger A."/>
            <person name="Kummerfeld S.K."/>
            <person name="Kurochkin I.V."/>
            <person name="Lareau L.F."/>
            <person name="Lazarevic D."/>
            <person name="Lipovich L."/>
            <person name="Liu J."/>
            <person name="Liuni S."/>
            <person name="McWilliam S."/>
            <person name="Madan Babu M."/>
            <person name="Madera M."/>
            <person name="Marchionni L."/>
            <person name="Matsuda H."/>
            <person name="Matsuzawa S."/>
            <person name="Miki H."/>
            <person name="Mignone F."/>
            <person name="Miyake S."/>
            <person name="Morris K."/>
            <person name="Mottagui-Tabar S."/>
            <person name="Mulder N."/>
            <person name="Nakano N."/>
            <person name="Nakauchi H."/>
            <person name="Ng P."/>
            <person name="Nilsson R."/>
            <person name="Nishiguchi S."/>
            <person name="Nishikawa S."/>
            <person name="Nori F."/>
            <person name="Ohara O."/>
            <person name="Okazaki Y."/>
            <person name="Orlando V."/>
            <person name="Pang K.C."/>
            <person name="Pavan W.J."/>
            <person name="Pavesi G."/>
            <person name="Pesole G."/>
            <person name="Petrovsky N."/>
            <person name="Piazza S."/>
            <person name="Reed J."/>
            <person name="Reid J.F."/>
            <person name="Ring B.Z."/>
            <person name="Ringwald M."/>
            <person name="Rost B."/>
            <person name="Ruan Y."/>
            <person name="Salzberg S.L."/>
            <person name="Sandelin A."/>
            <person name="Schneider C."/>
            <person name="Schoenbach C."/>
            <person name="Sekiguchi K."/>
            <person name="Semple C.A."/>
            <person name="Seno S."/>
            <person name="Sessa L."/>
            <person name="Sheng Y."/>
            <person name="Shibata Y."/>
            <person name="Shimada H."/>
            <person name="Shimada K."/>
            <person name="Silva D."/>
            <person name="Sinclair B."/>
            <person name="Sperling S."/>
            <person name="Stupka E."/>
            <person name="Sugiura K."/>
            <person name="Sultana R."/>
            <person name="Takenaka Y."/>
            <person name="Taki K."/>
            <person name="Tammoja K."/>
            <person name="Tan S.L."/>
            <person name="Tang S."/>
            <person name="Taylor M.S."/>
            <person name="Tegner J."/>
            <person name="Teichmann S.A."/>
            <person name="Ueda H.R."/>
            <person name="van Nimwegen E."/>
            <person name="Verardo R."/>
            <person name="Wei C.L."/>
            <person name="Yagi K."/>
            <person name="Yamanishi H."/>
            <person name="Zabarovsky E."/>
            <person name="Zhu S."/>
            <person name="Zimmer A."/>
            <person name="Hide W."/>
            <person name="Bult C."/>
            <person name="Grimmond S.M."/>
            <person name="Teasdale R.D."/>
            <person name="Liu E.T."/>
            <person name="Brusic V."/>
            <person name="Quackenbush J."/>
            <person name="Wahlestedt C."/>
            <person name="Mattick J.S."/>
            <person name="Hume D.A."/>
            <person name="Kai C."/>
            <person name="Sasaki D."/>
            <person name="Tomaru Y."/>
            <person name="Fukuda S."/>
            <person name="Kanamori-Katayama M."/>
            <person name="Suzuki M."/>
            <person name="Aoki J."/>
            <person name="Arakawa T."/>
            <person name="Iida J."/>
            <person name="Imamura K."/>
            <person name="Itoh M."/>
            <person name="Kato T."/>
            <person name="Kawaji H."/>
            <person name="Kawagashira N."/>
            <person name="Kawashima T."/>
            <person name="Kojima M."/>
            <person name="Kondo S."/>
            <person name="Konno H."/>
            <person name="Nakano K."/>
            <person name="Ninomiya N."/>
            <person name="Nishio T."/>
            <person name="Okada M."/>
            <person name="Plessy C."/>
            <person name="Shibata K."/>
            <person name="Shiraki T."/>
            <person name="Suzuki S."/>
            <person name="Tagami M."/>
            <person name="Waki K."/>
            <person name="Watahiki A."/>
            <person name="Okamura-Oho Y."/>
            <person name="Suzuki H."/>
            <person name="Kawai J."/>
            <person name="Hayashizaki Y."/>
        </authorList>
    </citation>
    <scope>NUCLEOTIDE SEQUENCE [LARGE SCALE MRNA] OF 32-672 (ISOFORM 1)</scope>
    <scope>NUCLEOTIDE SEQUENCE [LARGE SCALE MRNA] OF 36-672 (ISOFORM 2)</scope>
    <source>
        <strain>C57BL/6J</strain>
        <tissue>Cerebellum</tissue>
    </source>
</reference>
<reference key="3">
    <citation type="journal article" date="2004" name="Genome Res.">
        <title>The status, quality, and expansion of the NIH full-length cDNA project: the Mammalian Gene Collection (MGC).</title>
        <authorList>
            <consortium name="The MGC Project Team"/>
        </authorList>
    </citation>
    <scope>NUCLEOTIDE SEQUENCE [LARGE SCALE MRNA] OF 26-672 (ISOFORM 2)</scope>
    <source>
        <strain>C57BL/6J</strain>
        <tissue>Brain</tissue>
        <tissue>Eye</tissue>
    </source>
</reference>
<reference key="4">
    <citation type="submission" date="2009-01" db="UniProtKB">
        <authorList>
            <person name="Lubec G."/>
            <person name="Sunyer B."/>
            <person name="Chen W.-Q."/>
        </authorList>
    </citation>
    <scope>PROTEIN SEQUENCE OF 599-608</scope>
    <scope>IDENTIFICATION BY MASS SPECTROMETRY</scope>
    <source>
        <strain>OF1</strain>
        <tissue>Hippocampus</tissue>
    </source>
</reference>
<reference key="5">
    <citation type="journal article" date="2004" name="Mol. Cell. Proteomics">
        <title>Phosphoproteomic analysis of the developing mouse brain.</title>
        <authorList>
            <person name="Ballif B.A."/>
            <person name="Villen J."/>
            <person name="Beausoleil S.A."/>
            <person name="Schwartz D."/>
            <person name="Gygi S.P."/>
        </authorList>
    </citation>
    <scope>PHOSPHORYLATION [LARGE SCALE ANALYSIS] AT SER-356 AND SER-359</scope>
    <scope>IDENTIFICATION BY MASS SPECTROMETRY [LARGE SCALE ANALYSIS]</scope>
    <source>
        <tissue>Embryonic brain</tissue>
    </source>
</reference>
<reference key="6">
    <citation type="journal article" date="2006" name="Mol. Cell. Proteomics">
        <title>Comprehensive identification of phosphorylation sites in postsynaptic density preparations.</title>
        <authorList>
            <person name="Trinidad J.C."/>
            <person name="Specht C.G."/>
            <person name="Thalhammer A."/>
            <person name="Schoepfer R."/>
            <person name="Burlingame A.L."/>
        </authorList>
    </citation>
    <scope>PHOSPHORYLATION [LARGE SCALE ANALYSIS] AT SER-244</scope>
    <scope>IDENTIFICATION BY MASS SPECTROMETRY [LARGE SCALE ANALYSIS]</scope>
    <source>
        <tissue>Brain</tissue>
    </source>
</reference>
<reference key="7">
    <citation type="journal article" date="2010" name="Cell">
        <title>A tissue-specific atlas of mouse protein phosphorylation and expression.</title>
        <authorList>
            <person name="Huttlin E.L."/>
            <person name="Jedrychowski M.P."/>
            <person name="Elias J.E."/>
            <person name="Goswami T."/>
            <person name="Rad R."/>
            <person name="Beausoleil S.A."/>
            <person name="Villen J."/>
            <person name="Haas W."/>
            <person name="Sowa M.E."/>
            <person name="Gygi S.P."/>
        </authorList>
    </citation>
    <scope>PHOSPHORYLATION [LARGE SCALE ANALYSIS] AT SER-154; SER-223; SER-227 AND SER-284</scope>
    <scope>IDENTIFICATION BY MASS SPECTROMETRY [LARGE SCALE ANALYSIS]</scope>
    <source>
        <tissue>Brain</tissue>
    </source>
</reference>
<feature type="chain" id="PRO_0000281886" description="APC membrane recruitment protein 2">
    <location>
        <begin position="1"/>
        <end position="672"/>
    </location>
</feature>
<feature type="region of interest" description="Disordered" evidence="2">
    <location>
        <begin position="1"/>
        <end position="23"/>
    </location>
</feature>
<feature type="region of interest" description="Disordered" evidence="2">
    <location>
        <begin position="74"/>
        <end position="360"/>
    </location>
</feature>
<feature type="region of interest" description="Disordered" evidence="2">
    <location>
        <begin position="443"/>
        <end position="560"/>
    </location>
</feature>
<feature type="compositionally biased region" description="Gly residues" evidence="2">
    <location>
        <begin position="1"/>
        <end position="21"/>
    </location>
</feature>
<feature type="compositionally biased region" description="Low complexity" evidence="2">
    <location>
        <begin position="142"/>
        <end position="158"/>
    </location>
</feature>
<feature type="compositionally biased region" description="Basic and acidic residues" evidence="2">
    <location>
        <begin position="163"/>
        <end position="175"/>
    </location>
</feature>
<feature type="compositionally biased region" description="Basic and acidic residues" evidence="2">
    <location>
        <begin position="201"/>
        <end position="210"/>
    </location>
</feature>
<feature type="compositionally biased region" description="Basic and acidic residues" evidence="2">
    <location>
        <begin position="230"/>
        <end position="254"/>
    </location>
</feature>
<feature type="compositionally biased region" description="Low complexity" evidence="2">
    <location>
        <begin position="255"/>
        <end position="269"/>
    </location>
</feature>
<feature type="compositionally biased region" description="Basic and acidic residues" evidence="2">
    <location>
        <begin position="289"/>
        <end position="303"/>
    </location>
</feature>
<feature type="compositionally biased region" description="Low complexity" evidence="2">
    <location>
        <begin position="343"/>
        <end position="354"/>
    </location>
</feature>
<feature type="compositionally biased region" description="Low complexity" evidence="2">
    <location>
        <begin position="446"/>
        <end position="457"/>
    </location>
</feature>
<feature type="compositionally biased region" description="Basic and acidic residues" evidence="2">
    <location>
        <begin position="478"/>
        <end position="488"/>
    </location>
</feature>
<feature type="compositionally biased region" description="Basic and acidic residues" evidence="2">
    <location>
        <begin position="502"/>
        <end position="516"/>
    </location>
</feature>
<feature type="modified residue" description="Phosphoserine" evidence="8">
    <location>
        <position position="154"/>
    </location>
</feature>
<feature type="modified residue" description="Phosphoserine" evidence="8">
    <location>
        <position position="223"/>
    </location>
</feature>
<feature type="modified residue" description="Phosphoserine" evidence="8">
    <location>
        <position position="227"/>
    </location>
</feature>
<feature type="modified residue" description="Phosphoserine" evidence="7">
    <location>
        <position position="244"/>
    </location>
</feature>
<feature type="modified residue" description="Phosphoserine" evidence="8">
    <location>
        <position position="284"/>
    </location>
</feature>
<feature type="modified residue" description="Phosphoserine" evidence="6">
    <location>
        <position position="356"/>
    </location>
</feature>
<feature type="modified residue" description="Phosphoserine" evidence="6">
    <location>
        <position position="359"/>
    </location>
</feature>
<feature type="splice variant" id="VSP_024090" description="In isoform 2." evidence="3 4">
    <location>
        <begin position="255"/>
        <end position="380"/>
    </location>
</feature>
<dbReference type="EMBL" id="AC103355">
    <property type="status" value="NOT_ANNOTATED_CDS"/>
    <property type="molecule type" value="Genomic_DNA"/>
</dbReference>
<dbReference type="EMBL" id="AK032651">
    <property type="protein sequence ID" value="BAC27972.1"/>
    <property type="status" value="ALT_INIT"/>
    <property type="molecule type" value="mRNA"/>
</dbReference>
<dbReference type="EMBL" id="AK011185">
    <property type="protein sequence ID" value="BAB27452.1"/>
    <property type="status" value="ALT_INIT"/>
    <property type="molecule type" value="mRNA"/>
</dbReference>
<dbReference type="EMBL" id="AK139177">
    <property type="protein sequence ID" value="BAE23912.1"/>
    <property type="status" value="ALT_INIT"/>
    <property type="molecule type" value="mRNA"/>
</dbReference>
<dbReference type="EMBL" id="BC030356">
    <property type="protein sequence ID" value="AAH30356.1"/>
    <property type="status" value="ALT_INIT"/>
    <property type="molecule type" value="mRNA"/>
</dbReference>
<dbReference type="EMBL" id="BC056350">
    <property type="protein sequence ID" value="AAH56350.1"/>
    <property type="status" value="ALT_INIT"/>
    <property type="molecule type" value="mRNA"/>
</dbReference>
<dbReference type="CCDS" id="CCDS27177.2">
    <molecule id="Q8CCJ4-1"/>
</dbReference>
<dbReference type="CCDS" id="CCDS88682.1">
    <molecule id="Q8CCJ4-2"/>
</dbReference>
<dbReference type="RefSeq" id="NP_001158177.2">
    <molecule id="Q8CCJ4-2"/>
    <property type="nucleotide sequence ID" value="NM_001164705.2"/>
</dbReference>
<dbReference type="RefSeq" id="NP_082389.2">
    <molecule id="Q8CCJ4-1"/>
    <property type="nucleotide sequence ID" value="NM_028113.4"/>
</dbReference>
<dbReference type="RefSeq" id="XP_006519653.1">
    <property type="nucleotide sequence ID" value="XM_006519590.3"/>
</dbReference>
<dbReference type="BioGRID" id="215168">
    <property type="interactions" value="6"/>
</dbReference>
<dbReference type="FunCoup" id="Q8CCJ4">
    <property type="interactions" value="1024"/>
</dbReference>
<dbReference type="IntAct" id="Q8CCJ4">
    <property type="interactions" value="1"/>
</dbReference>
<dbReference type="MINT" id="Q8CCJ4"/>
<dbReference type="STRING" id="10090.ENSMUSP00000159188"/>
<dbReference type="iPTMnet" id="Q8CCJ4"/>
<dbReference type="PhosphoSitePlus" id="Q8CCJ4"/>
<dbReference type="SwissPalm" id="Q8CCJ4"/>
<dbReference type="jPOST" id="Q8CCJ4"/>
<dbReference type="PaxDb" id="10090-ENSMUSP00000022561"/>
<dbReference type="PeptideAtlas" id="Q8CCJ4"/>
<dbReference type="ProteomicsDB" id="281969">
    <molecule id="Q8CCJ4-1"/>
</dbReference>
<dbReference type="ProteomicsDB" id="281970">
    <molecule id="Q8CCJ4-2"/>
</dbReference>
<dbReference type="Antibodypedia" id="49984">
    <property type="antibodies" value="24 antibodies from 9 providers"/>
</dbReference>
<dbReference type="DNASU" id="72125"/>
<dbReference type="Ensembl" id="ENSMUST00000022561.9">
    <molecule id="Q8CCJ4-1"/>
    <property type="protein sequence ID" value="ENSMUSP00000022561.8"/>
    <property type="gene ID" value="ENSMUSG00000021986.10"/>
</dbReference>
<dbReference type="Ensembl" id="ENSMUST00000225247.3">
    <molecule id="Q8CCJ4-2"/>
    <property type="protein sequence ID" value="ENSMUSP00000153031.3"/>
    <property type="gene ID" value="ENSMUSG00000021986.10"/>
</dbReference>
<dbReference type="GeneID" id="72125"/>
<dbReference type="KEGG" id="mmu:72125"/>
<dbReference type="UCSC" id="uc007ufb.2">
    <molecule id="Q8CCJ4-2"/>
    <property type="organism name" value="mouse"/>
</dbReference>
<dbReference type="UCSC" id="uc011zmz.1">
    <molecule id="Q8CCJ4-1"/>
    <property type="organism name" value="mouse"/>
</dbReference>
<dbReference type="AGR" id="MGI:1919375"/>
<dbReference type="CTD" id="219287"/>
<dbReference type="MGI" id="MGI:1919375">
    <property type="gene designation" value="Amer2"/>
</dbReference>
<dbReference type="VEuPathDB" id="HostDB:ENSMUSG00000021986"/>
<dbReference type="eggNOG" id="ENOG502QU08">
    <property type="taxonomic scope" value="Eukaryota"/>
</dbReference>
<dbReference type="GeneTree" id="ENSGT00530000063529"/>
<dbReference type="InParanoid" id="Q8CCJ4"/>
<dbReference type="OMA" id="RICLMFA"/>
<dbReference type="OrthoDB" id="9943219at2759"/>
<dbReference type="PhylomeDB" id="Q8CCJ4"/>
<dbReference type="TreeFam" id="TF333006"/>
<dbReference type="BioGRID-ORCS" id="72125">
    <property type="hits" value="3 hits in 76 CRISPR screens"/>
</dbReference>
<dbReference type="ChiTaRS" id="Amer2">
    <property type="organism name" value="mouse"/>
</dbReference>
<dbReference type="PRO" id="PR:Q8CCJ4"/>
<dbReference type="Proteomes" id="UP000000589">
    <property type="component" value="Chromosome 14"/>
</dbReference>
<dbReference type="RNAct" id="Q8CCJ4">
    <property type="molecule type" value="protein"/>
</dbReference>
<dbReference type="Bgee" id="ENSMUSG00000021986">
    <property type="expression patterns" value="Expressed in superior cervical ganglion and 161 other cell types or tissues"/>
</dbReference>
<dbReference type="ExpressionAtlas" id="Q8CCJ4">
    <property type="expression patterns" value="baseline and differential"/>
</dbReference>
<dbReference type="GO" id="GO:0005886">
    <property type="term" value="C:plasma membrane"/>
    <property type="evidence" value="ECO:0000250"/>
    <property type="project" value="UniProtKB"/>
</dbReference>
<dbReference type="GO" id="GO:0005546">
    <property type="term" value="F:phosphatidylinositol-4,5-bisphosphate binding"/>
    <property type="evidence" value="ECO:0000250"/>
    <property type="project" value="UniProtKB"/>
</dbReference>
<dbReference type="GO" id="GO:0007398">
    <property type="term" value="P:ectoderm development"/>
    <property type="evidence" value="ECO:0000250"/>
    <property type="project" value="UniProtKB"/>
</dbReference>
<dbReference type="GO" id="GO:0090090">
    <property type="term" value="P:negative regulation of canonical Wnt signaling pathway"/>
    <property type="evidence" value="ECO:0000250"/>
    <property type="project" value="UniProtKB"/>
</dbReference>
<dbReference type="GO" id="GO:0016055">
    <property type="term" value="P:Wnt signaling pathway"/>
    <property type="evidence" value="ECO:0007669"/>
    <property type="project" value="UniProtKB-KW"/>
</dbReference>
<dbReference type="InterPro" id="IPR019003">
    <property type="entry name" value="AMER"/>
</dbReference>
<dbReference type="PANTHER" id="PTHR22237:SF1">
    <property type="entry name" value="APC MEMBRANE RECRUITMENT PROTEIN 2"/>
    <property type="match status" value="1"/>
</dbReference>
<dbReference type="PANTHER" id="PTHR22237">
    <property type="entry name" value="APC MEMBRANE RECRUITMENT PROTEIN 2-RELATED"/>
    <property type="match status" value="1"/>
</dbReference>
<dbReference type="Pfam" id="PF09422">
    <property type="entry name" value="AMER"/>
    <property type="match status" value="1"/>
</dbReference>
<organism>
    <name type="scientific">Mus musculus</name>
    <name type="common">Mouse</name>
    <dbReference type="NCBI Taxonomy" id="10090"/>
    <lineage>
        <taxon>Eukaryota</taxon>
        <taxon>Metazoa</taxon>
        <taxon>Chordata</taxon>
        <taxon>Craniata</taxon>
        <taxon>Vertebrata</taxon>
        <taxon>Euteleostomi</taxon>
        <taxon>Mammalia</taxon>
        <taxon>Eutheria</taxon>
        <taxon>Euarchontoglires</taxon>
        <taxon>Glires</taxon>
        <taxon>Rodentia</taxon>
        <taxon>Myomorpha</taxon>
        <taxon>Muroidea</taxon>
        <taxon>Muridae</taxon>
        <taxon>Murinae</taxon>
        <taxon>Mus</taxon>
        <taxon>Mus</taxon>
    </lineage>
</organism>
<evidence type="ECO:0000250" key="1"/>
<evidence type="ECO:0000256" key="2">
    <source>
        <dbReference type="SAM" id="MobiDB-lite"/>
    </source>
</evidence>
<evidence type="ECO:0000303" key="3">
    <source>
    </source>
</evidence>
<evidence type="ECO:0000303" key="4">
    <source>
    </source>
</evidence>
<evidence type="ECO:0000305" key="5"/>
<evidence type="ECO:0007744" key="6">
    <source>
    </source>
</evidence>
<evidence type="ECO:0007744" key="7">
    <source>
    </source>
</evidence>
<evidence type="ECO:0007744" key="8">
    <source>
    </source>
</evidence>
<sequence length="672" mass="69933">METGRSRGGGAAVSERGGGARAGVCGRQEQAGALAADMDSHCECAAETPAAEPPSGKINKAAFKLFKKRKSGGTMPSIFGVKNKGDGKSSGPTGMVRSRTHDGLAEVLVLEGSKKEEPPGGSDHSGARPIPGPPKPSGPGLGSLASSSVAKSHSFFSLLKKNGRSETGKGDHAEASKAGGKQKRGLKGIFSSMRWHRRDKRGKEEEEKAVRAAGPGNLVLPGSLTASLECVKEEPPRAARRPDSPGQDASRHAAGEPAGGEQAPASAESAPERICLEAGSPTGSGDQSSRGEDAEGHRREEKPGAALESGAGEVQAAEDASKTGDVPIKTVPLVDSEGGSGRASAVPDPSSVDPPSDPSADRICLMFSDVTSLKSFDSLTGCGDIIADPEEEAGPSCDKHVPGPGKPVLSKKNASVVAYQGGGEEMASPDQVDDTYLPEFWDMLSQTEDQGQGTQEGAAKAATASDIKLAPETSSDTRCGEAAKDMSSVKRRRLHRIPIESQQKEEPKHPEKEHQEGVPNSDEGYWDSTTPGPEEESISNSSSSKKVVIPRDSDSGDALCDLYVEPEASPATLPATEDPPCLSRLKPVSPGTITCPLRTPGSLLKDSKIPISIKHLSNLPSSHPVVHQQPARSEVPRTKIPVSKVLVRRVSNRGLAGTTIRAAACHDSAKKL</sequence>
<name>AMER2_MOUSE</name>
<keyword id="KW-0025">Alternative splicing</keyword>
<keyword id="KW-1003">Cell membrane</keyword>
<keyword id="KW-0903">Direct protein sequencing</keyword>
<keyword id="KW-0446">Lipid-binding</keyword>
<keyword id="KW-0472">Membrane</keyword>
<keyword id="KW-0597">Phosphoprotein</keyword>
<keyword id="KW-1185">Reference proteome</keyword>
<keyword id="KW-0879">Wnt signaling pathway</keyword>
<gene>
    <name type="primary">Amer2</name>
    <name type="synonym">Fam123a</name>
</gene>
<accession>Q8CCJ4</accession>
<accession>Q7TNC5</accession>
<accession>Q8K0U9</accession>
<accession>Q9D0Q2</accession>
<protein>
    <recommendedName>
        <fullName>APC membrane recruitment protein 2</fullName>
        <shortName>Amer2</shortName>
    </recommendedName>
    <alternativeName>
        <fullName>Protein FAM123A</fullName>
    </alternativeName>
</protein>